<reference key="1">
    <citation type="journal article" date="1988" name="Gene">
        <title>Molecular cloning and sequence analysis of a developmentally regulated cysteine-rich outer membrane protein from Chlamydia trachomatis.</title>
        <authorList>
            <person name="Clarke I.N."/>
            <person name="Ward M.E."/>
            <person name="Lambden P.R."/>
        </authorList>
    </citation>
    <scope>NUCLEOTIDE SEQUENCE [GENOMIC DNA]</scope>
    <source>
        <strain>L1/440/LN</strain>
    </source>
</reference>
<reference key="2">
    <citation type="journal article" date="1991" name="Infect. Immun.">
        <title>Sequence diversity of the 60-kilodalton protein and of a putative 15-kilodalton protein between the trachoma and lymphogranuloma venereum biovars of Chlamydia trachomatis.</title>
        <authorList>
            <person name="de la Maza L.M."/>
            <person name="Fiedler T.J."/>
            <person name="Carlson E.J."/>
            <person name="Markoff B.A."/>
            <person name="Peterson E.M."/>
        </authorList>
    </citation>
    <scope>NUCLEOTIDE SEQUENCE [GENOMIC DNA]</scope>
    <source>
        <strain>L3/404</strain>
    </source>
</reference>
<reference key="3">
    <citation type="journal article" date="2000" name="Cell. Microbiol.">
        <title>A secondary structure motif predictive of protein localization to the chlamydial inclusion membrane.</title>
        <authorList>
            <person name="Bannantine J.P."/>
            <person name="Griffiths R.S."/>
            <person name="Viratyosin W."/>
            <person name="Brown W.J."/>
            <person name="Rockey D.D."/>
        </authorList>
    </citation>
    <scope>LOCALIZATION TO INCLUSION MEMBRANES</scope>
    <source>
        <strain>L2/434/Bu</strain>
    </source>
</reference>
<reference key="4">
    <citation type="journal article" date="2003" name="J. Immunol.">
        <title>An inclusion membrane protein from Chlamydia trachomatis enters the MHC class I pathway and stimulates a CD8+ T cell response.</title>
        <authorList>
            <person name="Starnbach M.N."/>
            <person name="Loomis W.P."/>
            <person name="Ovendale P."/>
            <person name="Regan D."/>
            <person name="Hess B."/>
            <person name="Alderson M.R."/>
            <person name="Fling S.P."/>
        </authorList>
    </citation>
    <scope>RECOGNITION BY CD8+ T-CELLS</scope>
    <source>
        <strain>L2/434/Bu</strain>
    </source>
</reference>
<comment type="subcellular location">
    <subcellularLocation>
        <location evidence="5">Membrane</location>
        <topology evidence="5">Multi-pass membrane protein</topology>
    </subcellularLocation>
    <text evidence="3 4">Immunolocalizes to the inclusion membrane, the membrane that surrounds the intracellular parasite (PubMed:11207561). This protein is recognized by CD8+ T-cells in both human and mouse infections, suggesting it gains access to the host cytoplasm (PubMed:14568950).</text>
</comment>
<evidence type="ECO:0000255" key="1"/>
<evidence type="ECO:0000256" key="2">
    <source>
        <dbReference type="SAM" id="MobiDB-lite"/>
    </source>
</evidence>
<evidence type="ECO:0000269" key="3">
    <source>
    </source>
</evidence>
<evidence type="ECO:0000269" key="4">
    <source>
    </source>
</evidence>
<evidence type="ECO:0000305" key="5"/>
<keyword id="KW-0472">Membrane</keyword>
<keyword id="KW-0812">Transmembrane</keyword>
<keyword id="KW-1133">Transmembrane helix</keyword>
<protein>
    <recommendedName>
        <fullName>Sulfur-rich protein, serovars L1/L3</fullName>
    </recommendedName>
    <alternativeName>
        <fullName>15 kDa cysteine-rich outer membrane protein</fullName>
    </alternativeName>
    <alternativeName>
        <fullName>Cysteine-rich protein A</fullName>
    </alternativeName>
</protein>
<gene>
    <name type="primary">srp</name>
    <name type="synonym">crpA</name>
</gene>
<name>SRPL_CHLTH</name>
<dbReference type="EMBL" id="M35148">
    <property type="protein sequence ID" value="AAA23120.1"/>
    <property type="molecule type" value="Genomic_DNA"/>
</dbReference>
<dbReference type="EMBL" id="X54390">
    <property type="protein sequence ID" value="CAA38262.1"/>
    <property type="molecule type" value="Genomic_DNA"/>
</dbReference>
<dbReference type="PIR" id="JT0420">
    <property type="entry name" value="JT0420"/>
</dbReference>
<dbReference type="RefSeq" id="WP_015505893.1">
    <property type="nucleotide sequence ID" value="NZ_CP142852.1"/>
</dbReference>
<dbReference type="GO" id="GO:0019867">
    <property type="term" value="C:outer membrane"/>
    <property type="evidence" value="ECO:0007669"/>
    <property type="project" value="InterPro"/>
</dbReference>
<dbReference type="InterPro" id="IPR008436">
    <property type="entry name" value="CRPA"/>
</dbReference>
<dbReference type="Pfam" id="PF05745">
    <property type="entry name" value="CRPA"/>
    <property type="match status" value="1"/>
</dbReference>
<accession>P18587</accession>
<organism>
    <name type="scientific">Chlamydia trachomatis</name>
    <dbReference type="NCBI Taxonomy" id="813"/>
    <lineage>
        <taxon>Bacteria</taxon>
        <taxon>Pseudomonadati</taxon>
        <taxon>Chlamydiota</taxon>
        <taxon>Chlamydiia</taxon>
        <taxon>Chlamydiales</taxon>
        <taxon>Chlamydiaceae</taxon>
        <taxon>Chlamydia/Chlamydophila group</taxon>
        <taxon>Chlamydia</taxon>
    </lineage>
</organism>
<sequence length="150" mass="15836">MSTVPVVQGAGSSNSAQDISTSSVPLTLQGRISNLLSSTAFKVGLVVMGLLLVMATIFLVSAASFVNPIYLAIPAIVGCVNICVGILSMEGYCSPERWSLCKKVLKASEDIIDDGQINNSNKVFTDERLNAIGGVVESLSRRNSLVDQTQ</sequence>
<feature type="chain" id="PRO_0000207125" description="Sulfur-rich protein, serovars L1/L3">
    <location>
        <begin position="1"/>
        <end position="150"/>
    </location>
</feature>
<feature type="transmembrane region" description="Helical" evidence="1">
    <location>
        <begin position="43"/>
        <end position="63"/>
    </location>
</feature>
<feature type="transmembrane region" description="Helical" evidence="1">
    <location>
        <begin position="69"/>
        <end position="89"/>
    </location>
</feature>
<feature type="region of interest" description="Disordered" evidence="2">
    <location>
        <begin position="1"/>
        <end position="20"/>
    </location>
</feature>
<proteinExistence type="predicted"/>